<keyword id="KW-0963">Cytoplasm</keyword>
<keyword id="KW-0324">Glycolysis</keyword>
<keyword id="KW-0456">Lyase</keyword>
<keyword id="KW-0704">Schiff base</keyword>
<feature type="chain" id="PRO_0000138948" description="Fructose-bisphosphate aldolase class 1">
    <location>
        <begin position="1"/>
        <end position="281"/>
    </location>
</feature>
<feature type="active site" description="Schiff-base intermediate with dihydroxyacetone-P" evidence="1">
    <location>
        <position position="191"/>
    </location>
</feature>
<proteinExistence type="inferred from homology"/>
<protein>
    <recommendedName>
        <fullName>Fructose-bisphosphate aldolase class 1</fullName>
        <ecNumber>4.1.2.13</ecNumber>
    </recommendedName>
    <alternativeName>
        <fullName>Fructose-bisphosphate aldolase class I</fullName>
        <shortName>FBP aldolase</shortName>
    </alternativeName>
</protein>
<sequence>MEALQNIGIKRRLRRFFRRDGRALIFAMDHGFEHGPTDFEPVWEHVNPRVIIRKVVRAGVDGVMMLPGMARIAGDDVKPEVGLMIKITSKTNLRPKAEQLMQSQLAFVEDAIKLGADAIAATVYWGSPQEDAMMRQFAEIVSYAHDLGFPVVQFAYPRGPYIDEKYGRKEDYRVVMYGARAAAEMGADMIKTYWTGSRETFAKVVDAAAGVPVLLSGGAKAENPLDFLKVVYEVIEAGGSGAVVGRNIFQRENPEPMIKALIRVIHRNEDPEEAAKAEGLL</sequence>
<comment type="catalytic activity">
    <reaction>
        <text>beta-D-fructose 1,6-bisphosphate = D-glyceraldehyde 3-phosphate + dihydroxyacetone phosphate</text>
        <dbReference type="Rhea" id="RHEA:14729"/>
        <dbReference type="ChEBI" id="CHEBI:32966"/>
        <dbReference type="ChEBI" id="CHEBI:57642"/>
        <dbReference type="ChEBI" id="CHEBI:59776"/>
        <dbReference type="EC" id="4.1.2.13"/>
    </reaction>
</comment>
<comment type="activity regulation">
    <text evidence="1">Activated by citrate.</text>
</comment>
<comment type="subunit">
    <text evidence="1">Homooctamer.</text>
</comment>
<comment type="subcellular location">
    <subcellularLocation>
        <location evidence="2">Cytoplasm</location>
    </subcellularLocation>
</comment>
<comment type="similarity">
    <text evidence="2">Belongs to the DeoC/FbaB aldolase family.</text>
</comment>
<dbReference type="EC" id="4.1.2.13"/>
<dbReference type="EMBL" id="AJ248283">
    <property type="protein sequence ID" value="CAB49012.1"/>
    <property type="molecule type" value="Genomic_DNA"/>
</dbReference>
<dbReference type="EMBL" id="HE613800">
    <property type="protein sequence ID" value="CCE69464.1"/>
    <property type="molecule type" value="Genomic_DNA"/>
</dbReference>
<dbReference type="PIR" id="E75195">
    <property type="entry name" value="E75195"/>
</dbReference>
<dbReference type="RefSeq" id="WP_010867213.1">
    <property type="nucleotide sequence ID" value="NC_000868.1"/>
</dbReference>
<dbReference type="SMR" id="Q9V2I6"/>
<dbReference type="STRING" id="272844.PAB0049"/>
<dbReference type="KEGG" id="pab:PAB0049"/>
<dbReference type="PATRIC" id="fig|272844.11.peg.102"/>
<dbReference type="eggNOG" id="arCOG04044">
    <property type="taxonomic scope" value="Archaea"/>
</dbReference>
<dbReference type="HOGENOM" id="CLU_057069_2_2_2"/>
<dbReference type="OrthoDB" id="6329at2157"/>
<dbReference type="PhylomeDB" id="Q9V2I6"/>
<dbReference type="Proteomes" id="UP000000810">
    <property type="component" value="Chromosome"/>
</dbReference>
<dbReference type="Proteomes" id="UP000009139">
    <property type="component" value="Chromosome"/>
</dbReference>
<dbReference type="GO" id="GO:0005737">
    <property type="term" value="C:cytoplasm"/>
    <property type="evidence" value="ECO:0007669"/>
    <property type="project" value="UniProtKB-SubCell"/>
</dbReference>
<dbReference type="GO" id="GO:0004332">
    <property type="term" value="F:fructose-bisphosphate aldolase activity"/>
    <property type="evidence" value="ECO:0007669"/>
    <property type="project" value="UniProtKB-EC"/>
</dbReference>
<dbReference type="GO" id="GO:0006096">
    <property type="term" value="P:glycolytic process"/>
    <property type="evidence" value="ECO:0007669"/>
    <property type="project" value="UniProtKB-KW"/>
</dbReference>
<dbReference type="CDD" id="cd00958">
    <property type="entry name" value="DhnA"/>
    <property type="match status" value="1"/>
</dbReference>
<dbReference type="Gene3D" id="3.20.20.70">
    <property type="entry name" value="Aldolase class I"/>
    <property type="match status" value="1"/>
</dbReference>
<dbReference type="InterPro" id="IPR013785">
    <property type="entry name" value="Aldolase_TIM"/>
</dbReference>
<dbReference type="InterPro" id="IPR002915">
    <property type="entry name" value="DeoC/FbaB/LacD_aldolase"/>
</dbReference>
<dbReference type="InterPro" id="IPR050456">
    <property type="entry name" value="DeoC/FbaB_aldolase"/>
</dbReference>
<dbReference type="InterPro" id="IPR053414">
    <property type="entry name" value="FBA_class_1"/>
</dbReference>
<dbReference type="InterPro" id="IPR041720">
    <property type="entry name" value="FbaB-like"/>
</dbReference>
<dbReference type="NCBIfam" id="NF040816">
    <property type="entry name" value="Fbpase1_Arch"/>
    <property type="match status" value="1"/>
</dbReference>
<dbReference type="NCBIfam" id="NF005556">
    <property type="entry name" value="PRK07226.1"/>
    <property type="match status" value="1"/>
</dbReference>
<dbReference type="PANTHER" id="PTHR47916:SF1">
    <property type="entry name" value="3-HYDROXY-5-PHOSPHONOOXYPENTANE-2,4-DIONE THIOLASE"/>
    <property type="match status" value="1"/>
</dbReference>
<dbReference type="PANTHER" id="PTHR47916">
    <property type="entry name" value="FRUCTOSE-BISPHOSPHATE ALDOLASE CLASS 1"/>
    <property type="match status" value="1"/>
</dbReference>
<dbReference type="Pfam" id="PF01791">
    <property type="entry name" value="DeoC"/>
    <property type="match status" value="1"/>
</dbReference>
<dbReference type="PIRSF" id="PIRSF038992">
    <property type="entry name" value="Aldolase_Ia"/>
    <property type="match status" value="1"/>
</dbReference>
<dbReference type="SMART" id="SM01133">
    <property type="entry name" value="DeoC"/>
    <property type="match status" value="1"/>
</dbReference>
<dbReference type="SUPFAM" id="SSF51569">
    <property type="entry name" value="Aldolase"/>
    <property type="match status" value="1"/>
</dbReference>
<name>ALF1_PYRAB</name>
<evidence type="ECO:0000250" key="1"/>
<evidence type="ECO:0000305" key="2"/>
<organism>
    <name type="scientific">Pyrococcus abyssi (strain GE5 / Orsay)</name>
    <dbReference type="NCBI Taxonomy" id="272844"/>
    <lineage>
        <taxon>Archaea</taxon>
        <taxon>Methanobacteriati</taxon>
        <taxon>Methanobacteriota</taxon>
        <taxon>Thermococci</taxon>
        <taxon>Thermococcales</taxon>
        <taxon>Thermococcaceae</taxon>
        <taxon>Pyrococcus</taxon>
    </lineage>
</organism>
<gene>
    <name type="primary">fba</name>
    <name type="ordered locus">PYRAB00890</name>
    <name type="ORF">PAB0049</name>
</gene>
<reference key="1">
    <citation type="journal article" date="2003" name="Mol. Microbiol.">
        <title>An integrated analysis of the genome of the hyperthermophilic archaeon Pyrococcus abyssi.</title>
        <authorList>
            <person name="Cohen G.N."/>
            <person name="Barbe V."/>
            <person name="Flament D."/>
            <person name="Galperin M."/>
            <person name="Heilig R."/>
            <person name="Lecompte O."/>
            <person name="Poch O."/>
            <person name="Prieur D."/>
            <person name="Querellou J."/>
            <person name="Ripp R."/>
            <person name="Thierry J.-C."/>
            <person name="Van der Oost J."/>
            <person name="Weissenbach J."/>
            <person name="Zivanovic Y."/>
            <person name="Forterre P."/>
        </authorList>
    </citation>
    <scope>NUCLEOTIDE SEQUENCE [LARGE SCALE GENOMIC DNA]</scope>
    <source>
        <strain>GE5 / Orsay</strain>
    </source>
</reference>
<reference key="2">
    <citation type="journal article" date="2012" name="Curr. Microbiol.">
        <title>Re-annotation of two hyperthermophilic archaea Pyrococcus abyssi GE5 and Pyrococcus furiosus DSM 3638.</title>
        <authorList>
            <person name="Gao J."/>
            <person name="Wang J."/>
        </authorList>
    </citation>
    <scope>GENOME REANNOTATION</scope>
    <source>
        <strain>GE5 / Orsay</strain>
    </source>
</reference>
<accession>Q9V2I6</accession>
<accession>G8ZFS3</accession>